<accession>Q4ZMY9</accession>
<dbReference type="EMBL" id="CP000075">
    <property type="protein sequence ID" value="AAY39483.1"/>
    <property type="molecule type" value="Genomic_DNA"/>
</dbReference>
<dbReference type="RefSeq" id="WP_003368915.1">
    <property type="nucleotide sequence ID" value="NC_007005.1"/>
</dbReference>
<dbReference type="RefSeq" id="YP_237521.1">
    <property type="nucleotide sequence ID" value="NC_007005.1"/>
</dbReference>
<dbReference type="SMR" id="Q4ZMY9"/>
<dbReference type="STRING" id="205918.Psyr_4453"/>
<dbReference type="GeneID" id="69861510"/>
<dbReference type="KEGG" id="psb:Psyr_4453"/>
<dbReference type="PATRIC" id="fig|205918.7.peg.4594"/>
<dbReference type="eggNOG" id="COG0378">
    <property type="taxonomic scope" value="Bacteria"/>
</dbReference>
<dbReference type="HOGENOM" id="CLU_072144_1_0_6"/>
<dbReference type="OrthoDB" id="9802035at2"/>
<dbReference type="Proteomes" id="UP000000426">
    <property type="component" value="Chromosome"/>
</dbReference>
<dbReference type="GO" id="GO:0005737">
    <property type="term" value="C:cytoplasm"/>
    <property type="evidence" value="ECO:0007669"/>
    <property type="project" value="UniProtKB-SubCell"/>
</dbReference>
<dbReference type="GO" id="GO:0005525">
    <property type="term" value="F:GTP binding"/>
    <property type="evidence" value="ECO:0007669"/>
    <property type="project" value="UniProtKB-KW"/>
</dbReference>
<dbReference type="GO" id="GO:0003924">
    <property type="term" value="F:GTPase activity"/>
    <property type="evidence" value="ECO:0007669"/>
    <property type="project" value="InterPro"/>
</dbReference>
<dbReference type="GO" id="GO:0016151">
    <property type="term" value="F:nickel cation binding"/>
    <property type="evidence" value="ECO:0007669"/>
    <property type="project" value="UniProtKB-UniRule"/>
</dbReference>
<dbReference type="GO" id="GO:0043419">
    <property type="term" value="P:urea catabolic process"/>
    <property type="evidence" value="ECO:0007669"/>
    <property type="project" value="InterPro"/>
</dbReference>
<dbReference type="CDD" id="cd05540">
    <property type="entry name" value="UreG"/>
    <property type="match status" value="1"/>
</dbReference>
<dbReference type="FunFam" id="3.40.50.300:FF:000208">
    <property type="entry name" value="Urease accessory protein UreG"/>
    <property type="match status" value="1"/>
</dbReference>
<dbReference type="Gene3D" id="3.40.50.300">
    <property type="entry name" value="P-loop containing nucleotide triphosphate hydrolases"/>
    <property type="match status" value="1"/>
</dbReference>
<dbReference type="HAMAP" id="MF_01389">
    <property type="entry name" value="UreG"/>
    <property type="match status" value="1"/>
</dbReference>
<dbReference type="InterPro" id="IPR003495">
    <property type="entry name" value="CobW/HypB/UreG_nucleotide-bd"/>
</dbReference>
<dbReference type="InterPro" id="IPR027417">
    <property type="entry name" value="P-loop_NTPase"/>
</dbReference>
<dbReference type="InterPro" id="IPR004400">
    <property type="entry name" value="UreG"/>
</dbReference>
<dbReference type="NCBIfam" id="TIGR00101">
    <property type="entry name" value="ureG"/>
    <property type="match status" value="1"/>
</dbReference>
<dbReference type="PANTHER" id="PTHR31715">
    <property type="entry name" value="UREASE ACCESSORY PROTEIN G"/>
    <property type="match status" value="1"/>
</dbReference>
<dbReference type="PANTHER" id="PTHR31715:SF0">
    <property type="entry name" value="UREASE ACCESSORY PROTEIN G"/>
    <property type="match status" value="1"/>
</dbReference>
<dbReference type="Pfam" id="PF02492">
    <property type="entry name" value="cobW"/>
    <property type="match status" value="1"/>
</dbReference>
<dbReference type="PIRSF" id="PIRSF005624">
    <property type="entry name" value="Ni-bind_GTPase"/>
    <property type="match status" value="1"/>
</dbReference>
<dbReference type="SUPFAM" id="SSF52540">
    <property type="entry name" value="P-loop containing nucleoside triphosphate hydrolases"/>
    <property type="match status" value="1"/>
</dbReference>
<evidence type="ECO:0000255" key="1">
    <source>
        <dbReference type="HAMAP-Rule" id="MF_01389"/>
    </source>
</evidence>
<proteinExistence type="inferred from homology"/>
<sequence>MNSQPLRVGIGGPVGSGKTALTLALCLALRDRYNLAVVTNDIYTREDADFLVRNEALAPERIIGVETGGCPHTAIREDASINLEAVDQLNRRFEGLDLIIVESGGDNLSATFSPELSDLTIYVIDVSAGDKLPRKGGPGICKSDLLVINKIDLAPLVGASLEMMDSDTRRMRGEKPFVFSNQKTGQGLEQIIAFIERQGLLTAAA</sequence>
<organism>
    <name type="scientific">Pseudomonas syringae pv. syringae (strain B728a)</name>
    <dbReference type="NCBI Taxonomy" id="205918"/>
    <lineage>
        <taxon>Bacteria</taxon>
        <taxon>Pseudomonadati</taxon>
        <taxon>Pseudomonadota</taxon>
        <taxon>Gammaproteobacteria</taxon>
        <taxon>Pseudomonadales</taxon>
        <taxon>Pseudomonadaceae</taxon>
        <taxon>Pseudomonas</taxon>
        <taxon>Pseudomonas syringae</taxon>
    </lineage>
</organism>
<keyword id="KW-0143">Chaperone</keyword>
<keyword id="KW-0963">Cytoplasm</keyword>
<keyword id="KW-0342">GTP-binding</keyword>
<keyword id="KW-0996">Nickel insertion</keyword>
<keyword id="KW-0547">Nucleotide-binding</keyword>
<protein>
    <recommendedName>
        <fullName evidence="1">Urease accessory protein UreG</fullName>
    </recommendedName>
</protein>
<comment type="function">
    <text evidence="1">Facilitates the functional incorporation of the urease nickel metallocenter. This process requires GTP hydrolysis, probably effectuated by UreG.</text>
</comment>
<comment type="subunit">
    <text evidence="1">Homodimer. UreD, UreF and UreG form a complex that acts as a GTP-hydrolysis-dependent molecular chaperone, activating the urease apoprotein by helping to assemble the nickel containing metallocenter of UreC. The UreE protein probably delivers the nickel.</text>
</comment>
<comment type="subcellular location">
    <subcellularLocation>
        <location evidence="1">Cytoplasm</location>
    </subcellularLocation>
</comment>
<comment type="similarity">
    <text evidence="1">Belongs to the SIMIBI class G3E GTPase family. UreG subfamily.</text>
</comment>
<name>UREG_PSEU2</name>
<feature type="chain" id="PRO_0000347431" description="Urease accessory protein UreG">
    <location>
        <begin position="1"/>
        <end position="205"/>
    </location>
</feature>
<feature type="binding site" evidence="1">
    <location>
        <begin position="12"/>
        <end position="19"/>
    </location>
    <ligand>
        <name>GTP</name>
        <dbReference type="ChEBI" id="CHEBI:37565"/>
    </ligand>
</feature>
<reference key="1">
    <citation type="journal article" date="2005" name="Proc. Natl. Acad. Sci. U.S.A.">
        <title>Comparison of the complete genome sequences of Pseudomonas syringae pv. syringae B728a and pv. tomato DC3000.</title>
        <authorList>
            <person name="Feil H."/>
            <person name="Feil W.S."/>
            <person name="Chain P."/>
            <person name="Larimer F."/>
            <person name="Dibartolo G."/>
            <person name="Copeland A."/>
            <person name="Lykidis A."/>
            <person name="Trong S."/>
            <person name="Nolan M."/>
            <person name="Goltsman E."/>
            <person name="Thiel J."/>
            <person name="Malfatti S."/>
            <person name="Loper J.E."/>
            <person name="Lapidus A."/>
            <person name="Detter J.C."/>
            <person name="Land M."/>
            <person name="Richardson P.M."/>
            <person name="Kyrpides N.C."/>
            <person name="Ivanova N."/>
            <person name="Lindow S.E."/>
        </authorList>
    </citation>
    <scope>NUCLEOTIDE SEQUENCE [LARGE SCALE GENOMIC DNA]</scope>
    <source>
        <strain>B728a</strain>
    </source>
</reference>
<gene>
    <name evidence="1" type="primary">ureG</name>
    <name type="ordered locus">Psyr_4453</name>
</gene>